<protein>
    <recommendedName>
        <fullName evidence="1">Methionine import ATP-binding protein MetN</fullName>
        <ecNumber evidence="1">7.4.2.11</ecNumber>
    </recommendedName>
</protein>
<sequence>MIELNQIVKRYKTKKQDVLAVDHVDLSIQSGSIFGVVGFSGAGKSTLIRLLNHLEQPTSGDVIIDGDTIGKLSKSDLRKKRQKVSMIFQHFNLLWSRTVLNNITFPLEIAGISRQEAKQRALELVELVGLKGREDAYPSELSGGQKQRVGIARALANEPSVLLCDEATSALDPQTTDEILELLLKIKEERNLTIVIITHEMHVIRRICDEVAVMENGKVIEQGKVSSVFENPQHDVTKRFVKDDLNDDFDESISELVSLNENDYVVRLNFTGNNATEPLVSYITKTHNLDVNILEANIKHTKDGSIGFLIIQFAVANSEKFEKFKNDLEAQHVSVEVVKHG</sequence>
<dbReference type="EC" id="7.4.2.11" evidence="1"/>
<dbReference type="EMBL" id="AP008934">
    <property type="protein sequence ID" value="BAE19011.1"/>
    <property type="molecule type" value="Genomic_DNA"/>
</dbReference>
<dbReference type="RefSeq" id="WP_011303544.1">
    <property type="nucleotide sequence ID" value="NZ_MTGA01000039.1"/>
</dbReference>
<dbReference type="SMR" id="Q49W48"/>
<dbReference type="GeneID" id="3615527"/>
<dbReference type="KEGG" id="ssp:SSP1866"/>
<dbReference type="PATRIC" id="fig|342451.11.peg.1863"/>
<dbReference type="eggNOG" id="COG1135">
    <property type="taxonomic scope" value="Bacteria"/>
</dbReference>
<dbReference type="HOGENOM" id="CLU_000604_1_3_9"/>
<dbReference type="OrthoDB" id="9802264at2"/>
<dbReference type="Proteomes" id="UP000006371">
    <property type="component" value="Chromosome"/>
</dbReference>
<dbReference type="GO" id="GO:0005886">
    <property type="term" value="C:plasma membrane"/>
    <property type="evidence" value="ECO:0007669"/>
    <property type="project" value="UniProtKB-SubCell"/>
</dbReference>
<dbReference type="GO" id="GO:0033232">
    <property type="term" value="F:ABC-type D-methionine transporter activity"/>
    <property type="evidence" value="ECO:0007669"/>
    <property type="project" value="UniProtKB-EC"/>
</dbReference>
<dbReference type="GO" id="GO:0005524">
    <property type="term" value="F:ATP binding"/>
    <property type="evidence" value="ECO:0007669"/>
    <property type="project" value="UniProtKB-KW"/>
</dbReference>
<dbReference type="GO" id="GO:0016887">
    <property type="term" value="F:ATP hydrolysis activity"/>
    <property type="evidence" value="ECO:0007669"/>
    <property type="project" value="InterPro"/>
</dbReference>
<dbReference type="CDD" id="cd03258">
    <property type="entry name" value="ABC_MetN_methionine_transporter"/>
    <property type="match status" value="1"/>
</dbReference>
<dbReference type="FunFam" id="3.40.50.300:FF:000056">
    <property type="entry name" value="Cell division ATP-binding protein FtsE"/>
    <property type="match status" value="1"/>
</dbReference>
<dbReference type="Gene3D" id="3.30.70.260">
    <property type="match status" value="1"/>
</dbReference>
<dbReference type="Gene3D" id="3.40.50.300">
    <property type="entry name" value="P-loop containing nucleotide triphosphate hydrolases"/>
    <property type="match status" value="1"/>
</dbReference>
<dbReference type="InterPro" id="IPR003593">
    <property type="entry name" value="AAA+_ATPase"/>
</dbReference>
<dbReference type="InterPro" id="IPR003439">
    <property type="entry name" value="ABC_transporter-like_ATP-bd"/>
</dbReference>
<dbReference type="InterPro" id="IPR017871">
    <property type="entry name" value="ABC_transporter-like_CS"/>
</dbReference>
<dbReference type="InterPro" id="IPR045865">
    <property type="entry name" value="ACT-like_dom_sf"/>
</dbReference>
<dbReference type="InterPro" id="IPR041701">
    <property type="entry name" value="MetN_ABC"/>
</dbReference>
<dbReference type="InterPro" id="IPR050086">
    <property type="entry name" value="MetN_ABC_transporter-like"/>
</dbReference>
<dbReference type="InterPro" id="IPR018449">
    <property type="entry name" value="NIL_domain"/>
</dbReference>
<dbReference type="InterPro" id="IPR027417">
    <property type="entry name" value="P-loop_NTPase"/>
</dbReference>
<dbReference type="PANTHER" id="PTHR43166">
    <property type="entry name" value="AMINO ACID IMPORT ATP-BINDING PROTEIN"/>
    <property type="match status" value="1"/>
</dbReference>
<dbReference type="PANTHER" id="PTHR43166:SF36">
    <property type="entry name" value="METHIONINE IMPORT ATP-BINDING PROTEIN METN 2"/>
    <property type="match status" value="1"/>
</dbReference>
<dbReference type="Pfam" id="PF00005">
    <property type="entry name" value="ABC_tran"/>
    <property type="match status" value="1"/>
</dbReference>
<dbReference type="Pfam" id="PF09383">
    <property type="entry name" value="NIL"/>
    <property type="match status" value="1"/>
</dbReference>
<dbReference type="SMART" id="SM00382">
    <property type="entry name" value="AAA"/>
    <property type="match status" value="1"/>
</dbReference>
<dbReference type="SMART" id="SM00930">
    <property type="entry name" value="NIL"/>
    <property type="match status" value="1"/>
</dbReference>
<dbReference type="SUPFAM" id="SSF55021">
    <property type="entry name" value="ACT-like"/>
    <property type="match status" value="1"/>
</dbReference>
<dbReference type="SUPFAM" id="SSF52540">
    <property type="entry name" value="P-loop containing nucleoside triphosphate hydrolases"/>
    <property type="match status" value="1"/>
</dbReference>
<dbReference type="PROSITE" id="PS00211">
    <property type="entry name" value="ABC_TRANSPORTER_1"/>
    <property type="match status" value="1"/>
</dbReference>
<dbReference type="PROSITE" id="PS50893">
    <property type="entry name" value="ABC_TRANSPORTER_2"/>
    <property type="match status" value="1"/>
</dbReference>
<dbReference type="PROSITE" id="PS51264">
    <property type="entry name" value="METN"/>
    <property type="match status" value="1"/>
</dbReference>
<proteinExistence type="inferred from homology"/>
<keyword id="KW-0029">Amino-acid transport</keyword>
<keyword id="KW-0067">ATP-binding</keyword>
<keyword id="KW-1003">Cell membrane</keyword>
<keyword id="KW-0472">Membrane</keyword>
<keyword id="KW-0547">Nucleotide-binding</keyword>
<keyword id="KW-1185">Reference proteome</keyword>
<keyword id="KW-1278">Translocase</keyword>
<keyword id="KW-0813">Transport</keyword>
<organism>
    <name type="scientific">Staphylococcus saprophyticus subsp. saprophyticus (strain ATCC 15305 / DSM 20229 / NCIMB 8711 / NCTC 7292 / S-41)</name>
    <dbReference type="NCBI Taxonomy" id="342451"/>
    <lineage>
        <taxon>Bacteria</taxon>
        <taxon>Bacillati</taxon>
        <taxon>Bacillota</taxon>
        <taxon>Bacilli</taxon>
        <taxon>Bacillales</taxon>
        <taxon>Staphylococcaceae</taxon>
        <taxon>Staphylococcus</taxon>
    </lineage>
</organism>
<reference key="1">
    <citation type="journal article" date="2005" name="Proc. Natl. Acad. Sci. U.S.A.">
        <title>Whole genome sequence of Staphylococcus saprophyticus reveals the pathogenesis of uncomplicated urinary tract infection.</title>
        <authorList>
            <person name="Kuroda M."/>
            <person name="Yamashita A."/>
            <person name="Hirakawa H."/>
            <person name="Kumano M."/>
            <person name="Morikawa K."/>
            <person name="Higashide M."/>
            <person name="Maruyama A."/>
            <person name="Inose Y."/>
            <person name="Matoba K."/>
            <person name="Toh H."/>
            <person name="Kuhara S."/>
            <person name="Hattori M."/>
            <person name="Ohta T."/>
        </authorList>
    </citation>
    <scope>NUCLEOTIDE SEQUENCE [LARGE SCALE GENOMIC DNA]</scope>
    <source>
        <strain>ATCC 15305 / DSM 20229 / NCIMB 8711 / NCTC 7292 / S-41</strain>
    </source>
</reference>
<feature type="chain" id="PRO_0000270410" description="Methionine import ATP-binding protein MetN">
    <location>
        <begin position="1"/>
        <end position="341"/>
    </location>
</feature>
<feature type="domain" description="ABC transporter" evidence="1">
    <location>
        <begin position="2"/>
        <end position="241"/>
    </location>
</feature>
<feature type="binding site" evidence="1">
    <location>
        <begin position="38"/>
        <end position="45"/>
    </location>
    <ligand>
        <name>ATP</name>
        <dbReference type="ChEBI" id="CHEBI:30616"/>
    </ligand>
</feature>
<comment type="function">
    <text evidence="1">Part of the ABC transporter complex MetNIQ involved in methionine import. Responsible for energy coupling to the transport system.</text>
</comment>
<comment type="catalytic activity">
    <reaction evidence="1">
        <text>L-methionine(out) + ATP + H2O = L-methionine(in) + ADP + phosphate + H(+)</text>
        <dbReference type="Rhea" id="RHEA:29779"/>
        <dbReference type="ChEBI" id="CHEBI:15377"/>
        <dbReference type="ChEBI" id="CHEBI:15378"/>
        <dbReference type="ChEBI" id="CHEBI:30616"/>
        <dbReference type="ChEBI" id="CHEBI:43474"/>
        <dbReference type="ChEBI" id="CHEBI:57844"/>
        <dbReference type="ChEBI" id="CHEBI:456216"/>
        <dbReference type="EC" id="7.4.2.11"/>
    </reaction>
</comment>
<comment type="catalytic activity">
    <reaction evidence="1">
        <text>D-methionine(out) + ATP + H2O = D-methionine(in) + ADP + phosphate + H(+)</text>
        <dbReference type="Rhea" id="RHEA:29767"/>
        <dbReference type="ChEBI" id="CHEBI:15377"/>
        <dbReference type="ChEBI" id="CHEBI:15378"/>
        <dbReference type="ChEBI" id="CHEBI:30616"/>
        <dbReference type="ChEBI" id="CHEBI:43474"/>
        <dbReference type="ChEBI" id="CHEBI:57932"/>
        <dbReference type="ChEBI" id="CHEBI:456216"/>
        <dbReference type="EC" id="7.4.2.11"/>
    </reaction>
</comment>
<comment type="subunit">
    <text evidence="1">The complex is composed of two ATP-binding proteins (MetN), two transmembrane proteins (MetI) and a solute-binding protein (MetQ).</text>
</comment>
<comment type="subcellular location">
    <subcellularLocation>
        <location evidence="1">Cell membrane</location>
        <topology evidence="1">Peripheral membrane protein</topology>
    </subcellularLocation>
</comment>
<comment type="similarity">
    <text evidence="1">Belongs to the ABC transporter superfamily. Methionine importer (TC 3.A.1.24) family.</text>
</comment>
<name>METN_STAS1</name>
<evidence type="ECO:0000255" key="1">
    <source>
        <dbReference type="HAMAP-Rule" id="MF_01719"/>
    </source>
</evidence>
<accession>Q49W48</accession>
<gene>
    <name evidence="1" type="primary">metN</name>
    <name type="ordered locus">SSP1866</name>
</gene>